<sequence length="340" mass="37204">MSDQRVIRAAAVQIAPDFERPGGTLDRVCAAIDEAASKGVQLIVFPETFVPYYPYFSFVRPPVASGADHMRLYEQAVVVPGPVTHAVSERARRHAMVVVLGVNERDHGSLYNTQLVFDIDGCQVLKRRKITPTFHERMIWGQGDAAGLKVARTGIARVGALACWEHYNPLARYALMTQHEEIHCSQFPGSLVGPIFAEQIEVTIRHHALESGCFVVNSTGWLSDAQIESVTTDPKLQKALRGGCMTAIVSPEGQHLAEPLREGEGMVVADLDMALITKRKRMMDSVGHYARPELLSLAINDRPAMPVVPMSMSFERAGADVAPEIISGGQDECQHEPVAG</sequence>
<name>NITR_PARP8</name>
<gene>
    <name evidence="8" type="ordered locus">Bphy_4561</name>
</gene>
<reference key="1">
    <citation type="journal article" date="2014" name="Stand. Genomic Sci.">
        <title>Complete genome sequence of Burkholderia phymatum STM815(T), a broad host range and efficient nitrogen-fixing symbiont of Mimosa species.</title>
        <authorList>
            <person name="Moulin L."/>
            <person name="Klonowska A."/>
            <person name="Caroline B."/>
            <person name="Booth K."/>
            <person name="Vriezen J.A."/>
            <person name="Melkonian R."/>
            <person name="James E.K."/>
            <person name="Young J.P."/>
            <person name="Bena G."/>
            <person name="Hauser L."/>
            <person name="Land M."/>
            <person name="Kyrpides N."/>
            <person name="Bruce D."/>
            <person name="Chain P."/>
            <person name="Copeland A."/>
            <person name="Pitluck S."/>
            <person name="Woyke T."/>
            <person name="Lizotte-Waniewski M."/>
            <person name="Bristow J."/>
            <person name="Riley M."/>
        </authorList>
    </citation>
    <scope>NUCLEOTIDE SEQUENCE [LARGE SCALE GENOMIC DNA]</scope>
    <source>
        <strain>DSM 17167 / CIP 108236 / LMG 21445 / STM815</strain>
    </source>
</reference>
<reference key="2">
    <citation type="journal article" date="2013" name="Adv. Synth. Catal.">
        <title>Nitrilase activity screening on structurally diverse substrates: providing biocatalytic tools for organic synthesis.</title>
        <authorList>
            <person name="Vergne-Vaxelaire C."/>
            <person name="Bordier F."/>
            <person name="Fossey A."/>
            <person name="Besnard-Gonnet M."/>
            <person name="Debard A."/>
            <person name="Mariage A."/>
            <person name="Pellouin V."/>
            <person name="Perret A."/>
            <person name="Petit J.L."/>
            <person name="Stam M."/>
            <person name="Salanoubat M."/>
            <person name="Weissenbach J."/>
            <person name="De Berardinis V."/>
            <person name="Zaparucha A."/>
        </authorList>
    </citation>
    <scope>FUNCTION</scope>
    <scope>CATALYTIC ACTIVITY</scope>
</reference>
<reference key="3">
    <citation type="journal article" date="2021" name="Biotechnol. J.">
        <title>Nitrilase immobilization and transposition from a micro-scale batch to a continuous process increase the nicotinic acid productivity.</title>
        <authorList>
            <person name="Teepakorn C."/>
            <person name="Zajkoska P."/>
            <person name="Cwicklinski G."/>
            <person name="De Berardinis V."/>
            <person name="Zaparucha A."/>
            <person name="Nonglaton G."/>
            <person name="Anxionnaz-Minvielle Z."/>
        </authorList>
    </citation>
    <scope>FUNCTION</scope>
    <scope>CATALYTIC ACTIVITY</scope>
    <scope>BIOTECHNOLOGY</scope>
</reference>
<reference key="4">
    <citation type="journal article" date="2021" name="Front. Bioeng. Biotechnol.">
        <title>Purification and characterization of Nit phym, a robust thermostable nitrilase from Paraburkholderia phymatum.</title>
        <authorList>
            <person name="Bessonnet T."/>
            <person name="Mariage A."/>
            <person name="Petit J.L."/>
            <person name="Pellouin V."/>
            <person name="Debard A."/>
            <person name="Zaparucha A."/>
            <person name="Vergne-Vaxelaire C."/>
            <person name="de Berardinis V."/>
        </authorList>
    </citation>
    <scope>FUNCTION</scope>
    <scope>CATALYTIC ACTIVITY</scope>
    <scope>ACTIVITY REGULATION</scope>
    <scope>BIOPHYSICOCHEMICAL PROPERTIES</scope>
    <scope>SUBUNIT</scope>
    <scope>BIOTECHNOLOGY</scope>
</reference>
<organism>
    <name type="scientific">Paraburkholderia phymatum (strain DSM 17167 / CIP 108236 / LMG 21445 / STM815)</name>
    <name type="common">Burkholderia phymatum</name>
    <dbReference type="NCBI Taxonomy" id="391038"/>
    <lineage>
        <taxon>Bacteria</taxon>
        <taxon>Pseudomonadati</taxon>
        <taxon>Pseudomonadota</taxon>
        <taxon>Betaproteobacteria</taxon>
        <taxon>Burkholderiales</taxon>
        <taxon>Burkholderiaceae</taxon>
        <taxon>Paraburkholderia</taxon>
    </lineage>
</organism>
<protein>
    <recommendedName>
        <fullName evidence="6">Nitrilase</fullName>
        <ecNumber evidence="2 3 4">3.5.5.1</ecNumber>
    </recommendedName>
    <alternativeName>
        <fullName evidence="6">NIT188</fullName>
    </alternativeName>
    <alternativeName>
        <fullName evidence="5">Nitphym</fullName>
    </alternativeName>
</protein>
<evidence type="ECO:0000255" key="1">
    <source>
        <dbReference type="PROSITE-ProRule" id="PRU00054"/>
    </source>
</evidence>
<evidence type="ECO:0000269" key="2">
    <source>
    </source>
</evidence>
<evidence type="ECO:0000269" key="3">
    <source>
    </source>
</evidence>
<evidence type="ECO:0000269" key="4">
    <source ref="2"/>
</evidence>
<evidence type="ECO:0000303" key="5">
    <source>
    </source>
</evidence>
<evidence type="ECO:0000303" key="6">
    <source ref="2"/>
</evidence>
<evidence type="ECO:0000305" key="7"/>
<evidence type="ECO:0000312" key="8">
    <source>
        <dbReference type="EMBL" id="ACC73673.1"/>
    </source>
</evidence>
<accession>B2JQY2</accession>
<feature type="chain" id="PRO_0000457875" description="Nitrilase">
    <location>
        <begin position="1"/>
        <end position="340"/>
    </location>
</feature>
<feature type="domain" description="CN hydrolase" evidence="1">
    <location>
        <begin position="7"/>
        <end position="273"/>
    </location>
</feature>
<feature type="active site" description="Proton acceptor" evidence="1">
    <location>
        <position position="47"/>
    </location>
</feature>
<feature type="active site" evidence="1">
    <location>
        <position position="129"/>
    </location>
</feature>
<feature type="active site" description="Nucleophile" evidence="1">
    <location>
        <position position="163"/>
    </location>
</feature>
<comment type="function">
    <text evidence="2 3 4">Catalyzes the hydrolysis of a broad range of nitriles to yield their corresponding carboxylic acid and ammonia (PubMed:34270173, PubMed:34277586, Ref.2). In vitro, shows high activity toward benzylic/unsaturated nitriles (PubMed:34277586). The preferred substrate is trans-cinnamonitrile, followed by mono/di-cyanopyridines and aromatic substituted nitriles, with a moderate activity toward 3-phenylpropionitrile (PubMed:34277586). Shows weaker activity toward the common dinitrile fumaronitrile (PubMed:34277586). Also shows weak activity toward some aliphatic nitriles, including adiponitrile and glutaronitrile, and the arylacetonitrile 2-thiopheneacetonitrile (PubMed:34277586).</text>
</comment>
<comment type="catalytic activity">
    <reaction evidence="2 3 4">
        <text>a nitrile + 2 H2O = a carboxylate + NH4(+)</text>
        <dbReference type="Rhea" id="RHEA:21724"/>
        <dbReference type="ChEBI" id="CHEBI:15377"/>
        <dbReference type="ChEBI" id="CHEBI:18379"/>
        <dbReference type="ChEBI" id="CHEBI:28938"/>
        <dbReference type="ChEBI" id="CHEBI:29067"/>
        <dbReference type="EC" id="3.5.5.1"/>
    </reaction>
</comment>
<comment type="catalytic activity">
    <reaction evidence="3 4">
        <text>phenylpropanonitrile + 2 H2O = 3-phenylpropanoate + NH4(+)</text>
        <dbReference type="Rhea" id="RHEA:45784"/>
        <dbReference type="ChEBI" id="CHEBI:15377"/>
        <dbReference type="ChEBI" id="CHEBI:28938"/>
        <dbReference type="ChEBI" id="CHEBI:51057"/>
        <dbReference type="ChEBI" id="CHEBI:85426"/>
        <dbReference type="EC" id="3.5.5.1"/>
    </reaction>
</comment>
<comment type="catalytic activity">
    <reaction evidence="3 4">
        <text>an aliphatic nitrile + 2 H2O = a carboxylate + NH4(+)</text>
        <dbReference type="Rhea" id="RHEA:46188"/>
        <dbReference type="ChEBI" id="CHEBI:15377"/>
        <dbReference type="ChEBI" id="CHEBI:28938"/>
        <dbReference type="ChEBI" id="CHEBI:29067"/>
        <dbReference type="ChEBI" id="CHEBI:80291"/>
    </reaction>
</comment>
<comment type="activity regulation">
    <text evidence="3">Highly resistant to various miscible cosolvents and tolerates high substrate concentrations.</text>
</comment>
<comment type="biophysicochemical properties">
    <phDependence>
        <text evidence="3">Optimum pH is 6.0-8.0 (PubMed:34277586). Activities drop at pH values below 5.5 and above 9.0 (PubMed:34277586).</text>
    </phDependence>
    <temperatureDependence>
        <text evidence="3">Optimum temperature is 40-50 degrees Celsius (PubMed:34277586). Displays high thermostability with 90% of remaining activity after 2 days at 30 degrees Celsius and a half-life of 18 hours at 60 degrees Celsius (PubMed:34277586).</text>
    </temperatureDependence>
</comment>
<comment type="subunit">
    <text evidence="3">Forms oligomers.</text>
</comment>
<comment type="biotechnology">
    <text evidence="2 3">Nitphym exhibits high stability at 30-50 degrees Celsius and broad substrate spectrum, and emerges as a promising candidate for industrial hydrolysis of nitriles (PubMed:34270173, PubMed:34277586). Immobilization of Nitphym in a packed-bed reactor enables the biotransformation of 3-cyanopyridine into nicotinic acid (also known as niacin or vitamin B3) in a continuous mode (PubMed:34270173).</text>
</comment>
<comment type="similarity">
    <text evidence="7">Belongs to the carbon-nitrogen hydrolase superfamily. Nitrilase family.</text>
</comment>
<keyword id="KW-0378">Hydrolase</keyword>
<keyword id="KW-1185">Reference proteome</keyword>
<proteinExistence type="evidence at protein level"/>
<dbReference type="EC" id="3.5.5.1" evidence="2 3 4"/>
<dbReference type="EMBL" id="CP001044">
    <property type="protein sequence ID" value="ACC73673.1"/>
    <property type="molecule type" value="Genomic_DNA"/>
</dbReference>
<dbReference type="RefSeq" id="WP_012403845.1">
    <property type="nucleotide sequence ID" value="NC_010623.1"/>
</dbReference>
<dbReference type="SMR" id="B2JQY2"/>
<dbReference type="STRING" id="391038.Bphy_4561"/>
<dbReference type="KEGG" id="bph:Bphy_4561"/>
<dbReference type="eggNOG" id="COG0388">
    <property type="taxonomic scope" value="Bacteria"/>
</dbReference>
<dbReference type="HOGENOM" id="CLU_030130_6_1_4"/>
<dbReference type="OrthoDB" id="9803803at2"/>
<dbReference type="Proteomes" id="UP000001192">
    <property type="component" value="Chromosome 2"/>
</dbReference>
<dbReference type="GO" id="GO:0000257">
    <property type="term" value="F:nitrilase activity"/>
    <property type="evidence" value="ECO:0007669"/>
    <property type="project" value="UniProtKB-ARBA"/>
</dbReference>
<dbReference type="CDD" id="cd07564">
    <property type="entry name" value="nitrilases_CHs"/>
    <property type="match status" value="1"/>
</dbReference>
<dbReference type="Gene3D" id="3.60.110.10">
    <property type="entry name" value="Carbon-nitrogen hydrolase"/>
    <property type="match status" value="1"/>
</dbReference>
<dbReference type="InterPro" id="IPR003010">
    <property type="entry name" value="C-N_Hydrolase"/>
</dbReference>
<dbReference type="InterPro" id="IPR036526">
    <property type="entry name" value="C-N_Hydrolase_sf"/>
</dbReference>
<dbReference type="InterPro" id="IPR023919">
    <property type="entry name" value="Nitrilase"/>
</dbReference>
<dbReference type="InterPro" id="IPR000132">
    <property type="entry name" value="Nitrilase/CN_hydratase_CS"/>
</dbReference>
<dbReference type="InterPro" id="IPR044149">
    <property type="entry name" value="Nitrilases_CHs"/>
</dbReference>
<dbReference type="NCBIfam" id="TIGR04048">
    <property type="entry name" value="nitrile_sll0784"/>
    <property type="match status" value="1"/>
</dbReference>
<dbReference type="PANTHER" id="PTHR46044:SF1">
    <property type="entry name" value="CN HYDROLASE DOMAIN-CONTAINING PROTEIN"/>
    <property type="match status" value="1"/>
</dbReference>
<dbReference type="PANTHER" id="PTHR46044">
    <property type="entry name" value="NITRILASE"/>
    <property type="match status" value="1"/>
</dbReference>
<dbReference type="Pfam" id="PF00795">
    <property type="entry name" value="CN_hydrolase"/>
    <property type="match status" value="1"/>
</dbReference>
<dbReference type="SUPFAM" id="SSF56317">
    <property type="entry name" value="Carbon-nitrogen hydrolase"/>
    <property type="match status" value="1"/>
</dbReference>
<dbReference type="PROSITE" id="PS50263">
    <property type="entry name" value="CN_HYDROLASE"/>
    <property type="match status" value="1"/>
</dbReference>
<dbReference type="PROSITE" id="PS00921">
    <property type="entry name" value="NITRIL_CHT_2"/>
    <property type="match status" value="1"/>
</dbReference>